<proteinExistence type="inferred from homology"/>
<organism>
    <name type="scientific">Pyrococcus horikoshii (strain ATCC 700860 / DSM 12428 / JCM 9974 / NBRC 100139 / OT-3)</name>
    <dbReference type="NCBI Taxonomy" id="70601"/>
    <lineage>
        <taxon>Archaea</taxon>
        <taxon>Methanobacteriati</taxon>
        <taxon>Methanobacteriota</taxon>
        <taxon>Thermococci</taxon>
        <taxon>Thermococcales</taxon>
        <taxon>Thermococcaceae</taxon>
        <taxon>Pyrococcus</taxon>
    </lineage>
</organism>
<feature type="chain" id="PRO_0000156327" description="Phosphopantetheine adenylyltransferase">
    <location>
        <begin position="1"/>
        <end position="158"/>
    </location>
</feature>
<accession>O58358</accession>
<name>COAD_PYRHO</name>
<dbReference type="EC" id="2.7.7.3" evidence="1"/>
<dbReference type="EMBL" id="BA000001">
    <property type="protein sequence ID" value="BAA29713.1"/>
    <property type="status" value="ALT_INIT"/>
    <property type="molecule type" value="Genomic_DNA"/>
</dbReference>
<dbReference type="PIR" id="G71106">
    <property type="entry name" value="G71106"/>
</dbReference>
<dbReference type="SMR" id="O58358"/>
<dbReference type="STRING" id="70601.gene:9377566"/>
<dbReference type="EnsemblBacteria" id="BAA29713">
    <property type="protein sequence ID" value="BAA29713"/>
    <property type="gene ID" value="BAA29713"/>
</dbReference>
<dbReference type="KEGG" id="pho:PH0624"/>
<dbReference type="eggNOG" id="arCOG01223">
    <property type="taxonomic scope" value="Archaea"/>
</dbReference>
<dbReference type="UniPathway" id="UPA00241"/>
<dbReference type="Proteomes" id="UP000000752">
    <property type="component" value="Chromosome"/>
</dbReference>
<dbReference type="GO" id="GO:0005737">
    <property type="term" value="C:cytoplasm"/>
    <property type="evidence" value="ECO:0007669"/>
    <property type="project" value="UniProtKB-SubCell"/>
</dbReference>
<dbReference type="GO" id="GO:0005524">
    <property type="term" value="F:ATP binding"/>
    <property type="evidence" value="ECO:0007669"/>
    <property type="project" value="UniProtKB-KW"/>
</dbReference>
<dbReference type="GO" id="GO:0004140">
    <property type="term" value="F:dephospho-CoA kinase activity"/>
    <property type="evidence" value="ECO:0007669"/>
    <property type="project" value="TreeGrafter"/>
</dbReference>
<dbReference type="GO" id="GO:0004595">
    <property type="term" value="F:pantetheine-phosphate adenylyltransferase activity"/>
    <property type="evidence" value="ECO:0007669"/>
    <property type="project" value="UniProtKB-UniRule"/>
</dbReference>
<dbReference type="GO" id="GO:0015937">
    <property type="term" value="P:coenzyme A biosynthetic process"/>
    <property type="evidence" value="ECO:0007669"/>
    <property type="project" value="UniProtKB-UniRule"/>
</dbReference>
<dbReference type="CDD" id="cd02164">
    <property type="entry name" value="PPAT_CoAS"/>
    <property type="match status" value="1"/>
</dbReference>
<dbReference type="Gene3D" id="3.40.50.620">
    <property type="entry name" value="HUPs"/>
    <property type="match status" value="1"/>
</dbReference>
<dbReference type="HAMAP" id="MF_00647">
    <property type="entry name" value="PPAT_arch"/>
    <property type="match status" value="1"/>
</dbReference>
<dbReference type="InterPro" id="IPR054937">
    <property type="entry name" value="CoaD_Thcocales"/>
</dbReference>
<dbReference type="InterPro" id="IPR004821">
    <property type="entry name" value="Cyt_trans-like"/>
</dbReference>
<dbReference type="InterPro" id="IPR023540">
    <property type="entry name" value="PPAT_arch"/>
</dbReference>
<dbReference type="InterPro" id="IPR014729">
    <property type="entry name" value="Rossmann-like_a/b/a_fold"/>
</dbReference>
<dbReference type="NCBIfam" id="NF041124">
    <property type="entry name" value="CoaD_Thcocales"/>
    <property type="match status" value="1"/>
</dbReference>
<dbReference type="NCBIfam" id="TIGR00125">
    <property type="entry name" value="cyt_tran_rel"/>
    <property type="match status" value="1"/>
</dbReference>
<dbReference type="NCBIfam" id="NF001985">
    <property type="entry name" value="PRK00777.1"/>
    <property type="match status" value="1"/>
</dbReference>
<dbReference type="PANTHER" id="PTHR10695:SF46">
    <property type="entry name" value="BIFUNCTIONAL COENZYME A SYNTHASE-RELATED"/>
    <property type="match status" value="1"/>
</dbReference>
<dbReference type="PANTHER" id="PTHR10695">
    <property type="entry name" value="DEPHOSPHO-COA KINASE-RELATED"/>
    <property type="match status" value="1"/>
</dbReference>
<dbReference type="Pfam" id="PF01467">
    <property type="entry name" value="CTP_transf_like"/>
    <property type="match status" value="1"/>
</dbReference>
<dbReference type="SUPFAM" id="SSF52374">
    <property type="entry name" value="Nucleotidylyl transferase"/>
    <property type="match status" value="1"/>
</dbReference>
<gene>
    <name evidence="1" type="primary">coaD</name>
    <name type="ordered locus">PH0624</name>
</gene>
<reference key="1">
    <citation type="journal article" date="1998" name="DNA Res.">
        <title>Complete sequence and gene organization of the genome of a hyper-thermophilic archaebacterium, Pyrococcus horikoshii OT3.</title>
        <authorList>
            <person name="Kawarabayasi Y."/>
            <person name="Sawada M."/>
            <person name="Horikawa H."/>
            <person name="Haikawa Y."/>
            <person name="Hino Y."/>
            <person name="Yamamoto S."/>
            <person name="Sekine M."/>
            <person name="Baba S."/>
            <person name="Kosugi H."/>
            <person name="Hosoyama A."/>
            <person name="Nagai Y."/>
            <person name="Sakai M."/>
            <person name="Ogura K."/>
            <person name="Otsuka R."/>
            <person name="Nakazawa H."/>
            <person name="Takamiya M."/>
            <person name="Ohfuku Y."/>
            <person name="Funahashi T."/>
            <person name="Tanaka T."/>
            <person name="Kudoh Y."/>
            <person name="Yamazaki J."/>
            <person name="Kushida N."/>
            <person name="Oguchi A."/>
            <person name="Aoki K."/>
            <person name="Yoshizawa T."/>
            <person name="Nakamura Y."/>
            <person name="Robb F.T."/>
            <person name="Horikoshi K."/>
            <person name="Masuchi Y."/>
            <person name="Shizuya H."/>
            <person name="Kikuchi H."/>
        </authorList>
    </citation>
    <scope>NUCLEOTIDE SEQUENCE [LARGE SCALE GENOMIC DNA]</scope>
    <source>
        <strain>ATCC 700860 / DSM 12428 / JCM 9974 / NBRC 100139 / OT-3</strain>
    </source>
</reference>
<evidence type="ECO:0000255" key="1">
    <source>
        <dbReference type="HAMAP-Rule" id="MF_00647"/>
    </source>
</evidence>
<evidence type="ECO:0000305" key="2"/>
<sequence>MKRFKKVVVGGTFDRLHLGHKALLRKAFEVGKIVYIGLTSDEMVKEKPYAEKILPYERRLKDLIEFLEVNNFKGYRIIKINNAIGFTTEIRSLEAIVVSEETYKGALIVNRAREEVGLKPLEIIVIPIIKSKLGCKISSSLIRAGLIDPFGNPMKPRS</sequence>
<comment type="function">
    <text evidence="1">Reversibly transfers an adenylyl group from ATP to 4'-phosphopantetheine, yielding dephospho-CoA (dPCoA) and pyrophosphate.</text>
</comment>
<comment type="catalytic activity">
    <reaction evidence="1">
        <text>(R)-4'-phosphopantetheine + ATP + H(+) = 3'-dephospho-CoA + diphosphate</text>
        <dbReference type="Rhea" id="RHEA:19801"/>
        <dbReference type="ChEBI" id="CHEBI:15378"/>
        <dbReference type="ChEBI" id="CHEBI:30616"/>
        <dbReference type="ChEBI" id="CHEBI:33019"/>
        <dbReference type="ChEBI" id="CHEBI:57328"/>
        <dbReference type="ChEBI" id="CHEBI:61723"/>
        <dbReference type="EC" id="2.7.7.3"/>
    </reaction>
</comment>
<comment type="pathway">
    <text evidence="1">Cofactor biosynthesis; coenzyme A biosynthesis.</text>
</comment>
<comment type="subcellular location">
    <subcellularLocation>
        <location evidence="1">Cytoplasm</location>
    </subcellularLocation>
</comment>
<comment type="similarity">
    <text evidence="1">Belongs to the eukaryotic CoaD family.</text>
</comment>
<comment type="sequence caution" evidence="2">
    <conflict type="erroneous initiation">
        <sequence resource="EMBL-CDS" id="BAA29713"/>
    </conflict>
</comment>
<protein>
    <recommendedName>
        <fullName evidence="1">Phosphopantetheine adenylyltransferase</fullName>
        <ecNumber evidence="1">2.7.7.3</ecNumber>
    </recommendedName>
    <alternativeName>
        <fullName evidence="1">Dephospho-CoA pyrophosphorylase</fullName>
    </alternativeName>
    <alternativeName>
        <fullName evidence="1">Pantetheine-phosphate adenylyltransferase</fullName>
        <shortName evidence="1">PPAT</shortName>
    </alternativeName>
</protein>
<keyword id="KW-0067">ATP-binding</keyword>
<keyword id="KW-0173">Coenzyme A biosynthesis</keyword>
<keyword id="KW-0963">Cytoplasm</keyword>
<keyword id="KW-0547">Nucleotide-binding</keyword>
<keyword id="KW-0548">Nucleotidyltransferase</keyword>
<keyword id="KW-0808">Transferase</keyword>